<feature type="propeptide" id="PRO_0000251438" evidence="1">
    <location>
        <begin position="1"/>
        <end position="2"/>
    </location>
</feature>
<feature type="chain" id="PRO_0000251439" description="Ribulose bisphosphate carboxylase large chain">
    <location>
        <begin position="3"/>
        <end position="477"/>
    </location>
</feature>
<feature type="active site" description="Proton acceptor" evidence="1">
    <location>
        <position position="175"/>
    </location>
</feature>
<feature type="active site" description="Proton acceptor" evidence="1">
    <location>
        <position position="294"/>
    </location>
</feature>
<feature type="binding site" description="in homodimeric partner" evidence="1">
    <location>
        <position position="123"/>
    </location>
    <ligand>
        <name>substrate</name>
    </ligand>
</feature>
<feature type="binding site" evidence="1">
    <location>
        <position position="173"/>
    </location>
    <ligand>
        <name>substrate</name>
    </ligand>
</feature>
<feature type="binding site" evidence="1">
    <location>
        <position position="177"/>
    </location>
    <ligand>
        <name>substrate</name>
    </ligand>
</feature>
<feature type="binding site" description="via carbamate group" evidence="1">
    <location>
        <position position="201"/>
    </location>
    <ligand>
        <name>Mg(2+)</name>
        <dbReference type="ChEBI" id="CHEBI:18420"/>
    </ligand>
</feature>
<feature type="binding site" evidence="1">
    <location>
        <position position="203"/>
    </location>
    <ligand>
        <name>Mg(2+)</name>
        <dbReference type="ChEBI" id="CHEBI:18420"/>
    </ligand>
</feature>
<feature type="binding site" evidence="1">
    <location>
        <position position="204"/>
    </location>
    <ligand>
        <name>Mg(2+)</name>
        <dbReference type="ChEBI" id="CHEBI:18420"/>
    </ligand>
</feature>
<feature type="binding site" evidence="1">
    <location>
        <position position="295"/>
    </location>
    <ligand>
        <name>substrate</name>
    </ligand>
</feature>
<feature type="binding site" evidence="1">
    <location>
        <position position="327"/>
    </location>
    <ligand>
        <name>substrate</name>
    </ligand>
</feature>
<feature type="binding site" evidence="1">
    <location>
        <position position="379"/>
    </location>
    <ligand>
        <name>substrate</name>
    </ligand>
</feature>
<feature type="site" description="Transition state stabilizer" evidence="1">
    <location>
        <position position="334"/>
    </location>
</feature>
<feature type="modified residue" description="N-acetylproline" evidence="1">
    <location>
        <position position="3"/>
    </location>
</feature>
<feature type="modified residue" description="N6,N6,N6-trimethyllysine" evidence="1">
    <location>
        <position position="14"/>
    </location>
</feature>
<feature type="modified residue" description="N6-carboxylysine" evidence="1">
    <location>
        <position position="201"/>
    </location>
</feature>
<feature type="disulfide bond" description="Interchain; in linked form" evidence="1">
    <location>
        <position position="247"/>
    </location>
</feature>
<comment type="function">
    <text evidence="1">RuBisCO catalyzes two reactions: the carboxylation of D-ribulose 1,5-bisphosphate, the primary event in carbon dioxide fixation, as well as the oxidative fragmentation of the pentose substrate in the photorespiration process. Both reactions occur simultaneously and in competition at the same active site.</text>
</comment>
<comment type="catalytic activity">
    <reaction evidence="1">
        <text>2 (2R)-3-phosphoglycerate + 2 H(+) = D-ribulose 1,5-bisphosphate + CO2 + H2O</text>
        <dbReference type="Rhea" id="RHEA:23124"/>
        <dbReference type="ChEBI" id="CHEBI:15377"/>
        <dbReference type="ChEBI" id="CHEBI:15378"/>
        <dbReference type="ChEBI" id="CHEBI:16526"/>
        <dbReference type="ChEBI" id="CHEBI:57870"/>
        <dbReference type="ChEBI" id="CHEBI:58272"/>
        <dbReference type="EC" id="4.1.1.39"/>
    </reaction>
</comment>
<comment type="catalytic activity">
    <reaction evidence="1">
        <text>D-ribulose 1,5-bisphosphate + O2 = 2-phosphoglycolate + (2R)-3-phosphoglycerate + 2 H(+)</text>
        <dbReference type="Rhea" id="RHEA:36631"/>
        <dbReference type="ChEBI" id="CHEBI:15378"/>
        <dbReference type="ChEBI" id="CHEBI:15379"/>
        <dbReference type="ChEBI" id="CHEBI:57870"/>
        <dbReference type="ChEBI" id="CHEBI:58033"/>
        <dbReference type="ChEBI" id="CHEBI:58272"/>
    </reaction>
</comment>
<comment type="cofactor">
    <cofactor evidence="1">
        <name>Mg(2+)</name>
        <dbReference type="ChEBI" id="CHEBI:18420"/>
    </cofactor>
    <text evidence="1">Binds 1 Mg(2+) ion per subunit.</text>
</comment>
<comment type="subunit">
    <text evidence="1">Heterohexadecamer of 8 large chains and 8 small chains; disulfide-linked. The disulfide link is formed within the large subunit homodimers.</text>
</comment>
<comment type="subcellular location">
    <subcellularLocation>
        <location>Plastid</location>
        <location>Chloroplast</location>
    </subcellularLocation>
</comment>
<comment type="PTM">
    <text evidence="1">The disulfide bond which can form in the large chain dimeric partners within the hexadecamer appears to be associated with oxidative stress and protein turnover.</text>
</comment>
<comment type="miscellaneous">
    <text evidence="1">The basic functional RuBisCO is composed of a large chain homodimer in a 'head-to-tail' conformation. In form I RuBisCO this homodimer is arranged in a barrel-like tetramer with the small subunits forming a tetrameric 'cap' on each end of the 'barrel'.</text>
</comment>
<comment type="similarity">
    <text evidence="1">Belongs to the RuBisCO large chain family. Type I subfamily.</text>
</comment>
<keyword id="KW-0007">Acetylation</keyword>
<keyword id="KW-0113">Calvin cycle</keyword>
<keyword id="KW-0120">Carbon dioxide fixation</keyword>
<keyword id="KW-0150">Chloroplast</keyword>
<keyword id="KW-1015">Disulfide bond</keyword>
<keyword id="KW-0456">Lyase</keyword>
<keyword id="KW-0460">Magnesium</keyword>
<keyword id="KW-0479">Metal-binding</keyword>
<keyword id="KW-0488">Methylation</keyword>
<keyword id="KW-0503">Monooxygenase</keyword>
<keyword id="KW-0560">Oxidoreductase</keyword>
<keyword id="KW-0601">Photorespiration</keyword>
<keyword id="KW-0602">Photosynthesis</keyword>
<keyword id="KW-0934">Plastid</keyword>
<evidence type="ECO:0000255" key="1">
    <source>
        <dbReference type="HAMAP-Rule" id="MF_01338"/>
    </source>
</evidence>
<organism>
    <name type="scientific">Solanum bulbocastanum</name>
    <name type="common">Wild potato</name>
    <dbReference type="NCBI Taxonomy" id="147425"/>
    <lineage>
        <taxon>Eukaryota</taxon>
        <taxon>Viridiplantae</taxon>
        <taxon>Streptophyta</taxon>
        <taxon>Embryophyta</taxon>
        <taxon>Tracheophyta</taxon>
        <taxon>Spermatophyta</taxon>
        <taxon>Magnoliopsida</taxon>
        <taxon>eudicotyledons</taxon>
        <taxon>Gunneridae</taxon>
        <taxon>Pentapetalae</taxon>
        <taxon>asterids</taxon>
        <taxon>lamiids</taxon>
        <taxon>Solanales</taxon>
        <taxon>Solanaceae</taxon>
        <taxon>Solanoideae</taxon>
        <taxon>Solaneae</taxon>
        <taxon>Solanum</taxon>
    </lineage>
</organism>
<sequence>MSPQTETKASVGFKAGVKEYKLTYYTPEYQTKDTDILAAFRVTPQPGVPPEEAGAAVAAESSTGTWTTVWTDGLTSLDRYKGRCYRIERVVGEKDQYIAYVAYPLDLFEEGSVTNMFTSIVGNVFGFKALRALRLEDLRIPTAYVKTFQGPPHGIQVERDKLNKYGRPLLGCTIKPKLGLSAKNYGRAVYECLRGGLDFTKDDENVNSQPFMRWRDRFLFCAEALFKAQTETGEIKGHYLNATAGTCEEMMKRAVFARELGVPIVMHDYLTGGFTANTTLAHYCRDNGLLLHIHRAMHAVIDRQKNHGIHFRVLAKALRMSGGDHIHSGTVVGKLEGERDITLGFVDLLRDDFIEQDRSRGIYFTQDWVSLPGVLPVASGGIHVWHMPALTEIFGDDSVLQFGGGTLGHPWGNAPGAVANRVALEACVKARNEGRDLAREGNEIIREASKWSPELAAACEVWKEIVFNFAAVDVLDK</sequence>
<proteinExistence type="inferred from homology"/>
<accession>Q2MIH9</accession>
<name>RBL_SOLBU</name>
<protein>
    <recommendedName>
        <fullName evidence="1">Ribulose bisphosphate carboxylase large chain</fullName>
        <shortName evidence="1">RuBisCO large subunit</shortName>
        <ecNumber evidence="1">4.1.1.39</ecNumber>
    </recommendedName>
</protein>
<dbReference type="EC" id="4.1.1.39" evidence="1"/>
<dbReference type="EMBL" id="DQ347958">
    <property type="protein sequence ID" value="ABC56221.1"/>
    <property type="molecule type" value="Genomic_DNA"/>
</dbReference>
<dbReference type="RefSeq" id="YP_538856.1">
    <property type="nucleotide sequence ID" value="NC_007943.1"/>
</dbReference>
<dbReference type="SMR" id="Q2MIH9"/>
<dbReference type="GeneID" id="3989432"/>
<dbReference type="GO" id="GO:0009507">
    <property type="term" value="C:chloroplast"/>
    <property type="evidence" value="ECO:0007669"/>
    <property type="project" value="UniProtKB-SubCell"/>
</dbReference>
<dbReference type="GO" id="GO:0000287">
    <property type="term" value="F:magnesium ion binding"/>
    <property type="evidence" value="ECO:0007669"/>
    <property type="project" value="UniProtKB-UniRule"/>
</dbReference>
<dbReference type="GO" id="GO:0004497">
    <property type="term" value="F:monooxygenase activity"/>
    <property type="evidence" value="ECO:0007669"/>
    <property type="project" value="UniProtKB-KW"/>
</dbReference>
<dbReference type="GO" id="GO:0016984">
    <property type="term" value="F:ribulose-bisphosphate carboxylase activity"/>
    <property type="evidence" value="ECO:0007669"/>
    <property type="project" value="UniProtKB-UniRule"/>
</dbReference>
<dbReference type="GO" id="GO:0009853">
    <property type="term" value="P:photorespiration"/>
    <property type="evidence" value="ECO:0007669"/>
    <property type="project" value="UniProtKB-KW"/>
</dbReference>
<dbReference type="GO" id="GO:0019253">
    <property type="term" value="P:reductive pentose-phosphate cycle"/>
    <property type="evidence" value="ECO:0007669"/>
    <property type="project" value="UniProtKB-UniRule"/>
</dbReference>
<dbReference type="CDD" id="cd08212">
    <property type="entry name" value="RuBisCO_large_I"/>
    <property type="match status" value="1"/>
</dbReference>
<dbReference type="FunFam" id="3.20.20.110:FF:000001">
    <property type="entry name" value="Ribulose bisphosphate carboxylase large chain"/>
    <property type="match status" value="1"/>
</dbReference>
<dbReference type="FunFam" id="3.30.70.150:FF:000001">
    <property type="entry name" value="Ribulose bisphosphate carboxylase large chain"/>
    <property type="match status" value="1"/>
</dbReference>
<dbReference type="Gene3D" id="3.20.20.110">
    <property type="entry name" value="Ribulose bisphosphate carboxylase, large subunit, C-terminal domain"/>
    <property type="match status" value="1"/>
</dbReference>
<dbReference type="Gene3D" id="3.30.70.150">
    <property type="entry name" value="RuBisCO large subunit, N-terminal domain"/>
    <property type="match status" value="1"/>
</dbReference>
<dbReference type="HAMAP" id="MF_01338">
    <property type="entry name" value="RuBisCO_L_type1"/>
    <property type="match status" value="1"/>
</dbReference>
<dbReference type="InterPro" id="IPR033966">
    <property type="entry name" value="RuBisCO"/>
</dbReference>
<dbReference type="InterPro" id="IPR020878">
    <property type="entry name" value="RuBisCo_large_chain_AS"/>
</dbReference>
<dbReference type="InterPro" id="IPR000685">
    <property type="entry name" value="RuBisCO_lsu_C"/>
</dbReference>
<dbReference type="InterPro" id="IPR036376">
    <property type="entry name" value="RuBisCO_lsu_C_sf"/>
</dbReference>
<dbReference type="InterPro" id="IPR017443">
    <property type="entry name" value="RuBisCO_lsu_fd_N"/>
</dbReference>
<dbReference type="InterPro" id="IPR036422">
    <property type="entry name" value="RuBisCO_lsu_N_sf"/>
</dbReference>
<dbReference type="InterPro" id="IPR020888">
    <property type="entry name" value="RuBisCO_lsuI"/>
</dbReference>
<dbReference type="NCBIfam" id="NF003252">
    <property type="entry name" value="PRK04208.1"/>
    <property type="match status" value="1"/>
</dbReference>
<dbReference type="PANTHER" id="PTHR42704">
    <property type="entry name" value="RIBULOSE BISPHOSPHATE CARBOXYLASE"/>
    <property type="match status" value="1"/>
</dbReference>
<dbReference type="PANTHER" id="PTHR42704:SF16">
    <property type="entry name" value="RIBULOSE BISPHOSPHATE CARBOXYLASE LARGE CHAIN"/>
    <property type="match status" value="1"/>
</dbReference>
<dbReference type="Pfam" id="PF00016">
    <property type="entry name" value="RuBisCO_large"/>
    <property type="match status" value="1"/>
</dbReference>
<dbReference type="Pfam" id="PF02788">
    <property type="entry name" value="RuBisCO_large_N"/>
    <property type="match status" value="1"/>
</dbReference>
<dbReference type="SFLD" id="SFLDG01052">
    <property type="entry name" value="RuBisCO"/>
    <property type="match status" value="1"/>
</dbReference>
<dbReference type="SFLD" id="SFLDS00014">
    <property type="entry name" value="RuBisCO"/>
    <property type="match status" value="1"/>
</dbReference>
<dbReference type="SFLD" id="SFLDG00301">
    <property type="entry name" value="RuBisCO-like_proteins"/>
    <property type="match status" value="1"/>
</dbReference>
<dbReference type="SUPFAM" id="SSF51649">
    <property type="entry name" value="RuBisCo, C-terminal domain"/>
    <property type="match status" value="1"/>
</dbReference>
<dbReference type="SUPFAM" id="SSF54966">
    <property type="entry name" value="RuBisCO, large subunit, small (N-terminal) domain"/>
    <property type="match status" value="1"/>
</dbReference>
<dbReference type="PROSITE" id="PS00157">
    <property type="entry name" value="RUBISCO_LARGE"/>
    <property type="match status" value="1"/>
</dbReference>
<reference key="1">
    <citation type="submission" date="2006-01" db="EMBL/GenBank/DDBJ databases">
        <title>Complete chloroplast genome sequences of Solanum tuberosum, Solanum lycopersicum and comparative analyses with other Solanaceae genomes.</title>
        <authorList>
            <person name="Daniell H."/>
            <person name="Lee S.-B."/>
            <person name="Grevich J."/>
            <person name="Saski C."/>
            <person name="Quesada-Vargas T."/>
            <person name="Guda C."/>
            <person name="Tomkins J."/>
            <person name="Jansen R.K."/>
        </authorList>
    </citation>
    <scope>NUCLEOTIDE SEQUENCE [LARGE SCALE GENOMIC DNA]</scope>
    <source>
        <strain>cv. PT29</strain>
    </source>
</reference>
<geneLocation type="chloroplast"/>
<gene>
    <name evidence="1" type="primary">rbcL</name>
</gene>